<proteinExistence type="evidence at transcript level"/>
<protein>
    <recommendedName>
        <fullName>Lysozyme C</fullName>
        <ecNumber>3.2.1.17</ecNumber>
    </recommendedName>
    <alternativeName>
        <fullName>1,4-beta-N-acetylmuramidase C</fullName>
    </alternativeName>
</protein>
<organism>
    <name type="scientific">Callithrix jacchus</name>
    <name type="common">White-tufted-ear marmoset</name>
    <dbReference type="NCBI Taxonomy" id="9483"/>
    <lineage>
        <taxon>Eukaryota</taxon>
        <taxon>Metazoa</taxon>
        <taxon>Chordata</taxon>
        <taxon>Craniata</taxon>
        <taxon>Vertebrata</taxon>
        <taxon>Euteleostomi</taxon>
        <taxon>Mammalia</taxon>
        <taxon>Eutheria</taxon>
        <taxon>Euarchontoglires</taxon>
        <taxon>Primates</taxon>
        <taxon>Haplorrhini</taxon>
        <taxon>Platyrrhini</taxon>
        <taxon>Cebidae</taxon>
        <taxon>Callitrichinae</taxon>
        <taxon>Callithrix</taxon>
        <taxon>Callithrix</taxon>
    </lineage>
</organism>
<keyword id="KW-0929">Antimicrobial</keyword>
<keyword id="KW-0081">Bacteriolytic enzyme</keyword>
<keyword id="KW-1015">Disulfide bond</keyword>
<keyword id="KW-0326">Glycosidase</keyword>
<keyword id="KW-0378">Hydrolase</keyword>
<keyword id="KW-1185">Reference proteome</keyword>
<keyword id="KW-0732">Signal</keyword>
<accession>P79158</accession>
<dbReference type="EC" id="3.2.1.17"/>
<dbReference type="EMBL" id="U76923">
    <property type="protein sequence ID" value="AAB41203.1"/>
    <property type="molecule type" value="mRNA"/>
</dbReference>
<dbReference type="RefSeq" id="XP_002752792.1">
    <property type="nucleotide sequence ID" value="XM_002752746.4"/>
</dbReference>
<dbReference type="SMR" id="P79158"/>
<dbReference type="FunCoup" id="P79158">
    <property type="interactions" value="94"/>
</dbReference>
<dbReference type="STRING" id="9483.ENSCJAP00000075866"/>
<dbReference type="CAZy" id="GH22">
    <property type="family name" value="Glycoside Hydrolase Family 22"/>
</dbReference>
<dbReference type="Ensembl" id="ENSCJAT00000128205.1">
    <property type="protein sequence ID" value="ENSCJAP00000080986.1"/>
    <property type="gene ID" value="ENSCJAG00000001779.4"/>
</dbReference>
<dbReference type="GeneID" id="100393686"/>
<dbReference type="KEGG" id="cjc:100393686"/>
<dbReference type="CTD" id="4069"/>
<dbReference type="eggNOG" id="ENOG502S1S1">
    <property type="taxonomic scope" value="Eukaryota"/>
</dbReference>
<dbReference type="GeneTree" id="ENSGT00940000155811"/>
<dbReference type="HOGENOM" id="CLU_111620_0_1_1"/>
<dbReference type="InParanoid" id="P79158"/>
<dbReference type="OMA" id="VYERCEF"/>
<dbReference type="OrthoDB" id="17373at2759"/>
<dbReference type="TreeFam" id="TF324882"/>
<dbReference type="Proteomes" id="UP000008225">
    <property type="component" value="Chromosome 9"/>
</dbReference>
<dbReference type="Bgee" id="ENSCJAG00000001788">
    <property type="expression patterns" value="Expressed in kidney and 6 other cell types or tissues"/>
</dbReference>
<dbReference type="GO" id="GO:0003796">
    <property type="term" value="F:lysozyme activity"/>
    <property type="evidence" value="ECO:0007669"/>
    <property type="project" value="UniProtKB-EC"/>
</dbReference>
<dbReference type="GO" id="GO:0050829">
    <property type="term" value="P:defense response to Gram-negative bacterium"/>
    <property type="evidence" value="ECO:0007669"/>
    <property type="project" value="TreeGrafter"/>
</dbReference>
<dbReference type="GO" id="GO:0050830">
    <property type="term" value="P:defense response to Gram-positive bacterium"/>
    <property type="evidence" value="ECO:0007669"/>
    <property type="project" value="TreeGrafter"/>
</dbReference>
<dbReference type="GO" id="GO:0031640">
    <property type="term" value="P:killing of cells of another organism"/>
    <property type="evidence" value="ECO:0007669"/>
    <property type="project" value="UniProtKB-KW"/>
</dbReference>
<dbReference type="CDD" id="cd16897">
    <property type="entry name" value="LYZ_C"/>
    <property type="match status" value="1"/>
</dbReference>
<dbReference type="FunFam" id="1.10.530.10:FF:000001">
    <property type="entry name" value="Lysozyme C"/>
    <property type="match status" value="1"/>
</dbReference>
<dbReference type="Gene3D" id="1.10.530.10">
    <property type="match status" value="1"/>
</dbReference>
<dbReference type="InterPro" id="IPR001916">
    <property type="entry name" value="Glyco_hydro_22"/>
</dbReference>
<dbReference type="InterPro" id="IPR019799">
    <property type="entry name" value="Glyco_hydro_22_CS"/>
</dbReference>
<dbReference type="InterPro" id="IPR000974">
    <property type="entry name" value="Glyco_hydro_22_lys"/>
</dbReference>
<dbReference type="InterPro" id="IPR023346">
    <property type="entry name" value="Lysozyme-like_dom_sf"/>
</dbReference>
<dbReference type="PANTHER" id="PTHR11407">
    <property type="entry name" value="LYSOZYME C"/>
    <property type="match status" value="1"/>
</dbReference>
<dbReference type="PANTHER" id="PTHR11407:SF28">
    <property type="entry name" value="LYSOZYME C"/>
    <property type="match status" value="1"/>
</dbReference>
<dbReference type="Pfam" id="PF00062">
    <property type="entry name" value="Lys"/>
    <property type="match status" value="1"/>
</dbReference>
<dbReference type="PRINTS" id="PR00137">
    <property type="entry name" value="LYSOZYME"/>
</dbReference>
<dbReference type="PRINTS" id="PR00135">
    <property type="entry name" value="LYZLACT"/>
</dbReference>
<dbReference type="SMART" id="SM00263">
    <property type="entry name" value="LYZ1"/>
    <property type="match status" value="1"/>
</dbReference>
<dbReference type="SUPFAM" id="SSF53955">
    <property type="entry name" value="Lysozyme-like"/>
    <property type="match status" value="1"/>
</dbReference>
<dbReference type="PROSITE" id="PS00128">
    <property type="entry name" value="GLYCOSYL_HYDROL_F22_1"/>
    <property type="match status" value="1"/>
</dbReference>
<dbReference type="PROSITE" id="PS51348">
    <property type="entry name" value="GLYCOSYL_HYDROL_F22_2"/>
    <property type="match status" value="1"/>
</dbReference>
<evidence type="ECO:0000250" key="1"/>
<evidence type="ECO:0000255" key="2">
    <source>
        <dbReference type="PROSITE-ProRule" id="PRU00680"/>
    </source>
</evidence>
<sequence length="148" mass="16602">MKVLIILGLVLLSVMVQGKVFERCELARTLKRFGLDGYRGISLANWMCLAKWESDYNTRATNYNPGDQSTDYGIFQINSHYWCNNGRTPGAVNACHISCNALLQDDITEAVACAKRVVRDPQGIRAWVAWKAHCQNRDVSQYVQGCGV</sequence>
<feature type="signal peptide" evidence="1">
    <location>
        <begin position="1"/>
        <end position="18"/>
    </location>
</feature>
<feature type="chain" id="PRO_0000018459" description="Lysozyme C">
    <location>
        <begin position="19"/>
        <end position="148"/>
    </location>
</feature>
<feature type="domain" description="C-type lysozyme" evidence="2">
    <location>
        <begin position="19"/>
        <end position="148"/>
    </location>
</feature>
<feature type="active site" evidence="2">
    <location>
        <position position="53"/>
    </location>
</feature>
<feature type="active site" evidence="2">
    <location>
        <position position="71"/>
    </location>
</feature>
<feature type="disulfide bond" evidence="2">
    <location>
        <begin position="24"/>
        <end position="146"/>
    </location>
</feature>
<feature type="disulfide bond" evidence="2">
    <location>
        <begin position="48"/>
        <end position="134"/>
    </location>
</feature>
<feature type="disulfide bond" evidence="2">
    <location>
        <begin position="83"/>
        <end position="99"/>
    </location>
</feature>
<feature type="disulfide bond" evidence="2">
    <location>
        <begin position="95"/>
        <end position="113"/>
    </location>
</feature>
<reference key="1">
    <citation type="journal article" date="1997" name="Nature">
        <title>Episodic adaptive evolution of primate lysozymes.</title>
        <authorList>
            <person name="Messier W."/>
            <person name="Stewart C.B."/>
        </authorList>
    </citation>
    <scope>NUCLEOTIDE SEQUENCE [MRNA]</scope>
    <source>
        <tissue>Blood</tissue>
    </source>
</reference>
<comment type="function">
    <text>Lysozymes have primarily a bacteriolytic function; those in tissues and body fluids are associated with the monocyte-macrophage system and enhance the activity of immunoagents.</text>
</comment>
<comment type="catalytic activity">
    <reaction>
        <text>Hydrolysis of (1-&gt;4)-beta-linkages between N-acetylmuramic acid and N-acetyl-D-glucosamine residues in a peptidoglycan and between N-acetyl-D-glucosamine residues in chitodextrins.</text>
        <dbReference type="EC" id="3.2.1.17"/>
    </reaction>
</comment>
<comment type="subunit">
    <text>Monomer.</text>
</comment>
<comment type="miscellaneous">
    <text>Lysozyme C is capable of both hydrolysis and transglycosylation; it also shows a slight esterase activity. It acts rapidly on both peptide-substituted and unsubstituted peptidoglycan, and slowly on chitin oligosaccharides.</text>
</comment>
<comment type="similarity">
    <text evidence="2">Belongs to the glycosyl hydrolase 22 family.</text>
</comment>
<name>LYSC_CALJA</name>
<gene>
    <name type="primary">LYZ</name>
    <name type="synonym">LZM</name>
</gene>